<proteinExistence type="inferred from homology"/>
<comment type="function">
    <text evidence="1">F(1)F(0) ATP synthase produces ATP from ADP in the presence of a proton or sodium gradient. F-type ATPases consist of two structural domains, F(1) containing the extramembraneous catalytic core and F(0) containing the membrane proton channel, linked together by a central stalk and a peripheral stalk. During catalysis, ATP synthesis in the catalytic domain of F(1) is coupled via a rotary mechanism of the central stalk subunits to proton translocation.</text>
</comment>
<comment type="function">
    <text evidence="1">Key component of the F(0) channel; it plays a direct role in translocation across the membrane. A homomeric c-ring of between 10-14 subunits forms the central stalk rotor element with the F(1) delta and epsilon subunits.</text>
</comment>
<comment type="subunit">
    <text evidence="1">F-type ATPases have 2 components, F(1) - the catalytic core - and F(0) - the membrane proton channel. F(1) has five subunits: alpha(3), beta(3), gamma(1), delta(1), epsilon(1). F(0) has four main subunits: a(1), b(1), b'(1) and c(10-14). The alpha and beta chains form an alternating ring which encloses part of the gamma chain. F(1) is attached to F(0) by a central stalk formed by the gamma and epsilon chains, while a peripheral stalk is formed by the delta, b and b' chains.</text>
</comment>
<comment type="subcellular location">
    <subcellularLocation>
        <location evidence="1">Plastid</location>
        <location evidence="1">Chloroplast thylakoid membrane</location>
        <topology evidence="1">Multi-pass membrane protein</topology>
    </subcellularLocation>
</comment>
<comment type="miscellaneous">
    <text>In plastids the F-type ATPase is also known as CF(1)CF(0).</text>
</comment>
<comment type="similarity">
    <text evidence="1">Belongs to the ATPase C chain family.</text>
</comment>
<protein>
    <recommendedName>
        <fullName evidence="1">ATP synthase subunit c, chloroplastic</fullName>
    </recommendedName>
    <alternativeName>
        <fullName evidence="1">ATP synthase F(0) sector subunit c</fullName>
    </alternativeName>
    <alternativeName>
        <fullName evidence="1">ATPase subunit III</fullName>
    </alternativeName>
    <alternativeName>
        <fullName evidence="1">F-type ATPase subunit c</fullName>
        <shortName evidence="1">F-ATPase subunit c</shortName>
    </alternativeName>
    <alternativeName>
        <fullName evidence="1">Lipid-binding protein</fullName>
    </alternativeName>
</protein>
<reference key="1">
    <citation type="journal article" date="2007" name="Mol. Genet. Genomics">
        <title>Chloroplast genomes of the diatoms Phaeodactylum tricornutum and Thalassiosira pseudonana: comparison with other plastid genomes of the red lineage.</title>
        <authorList>
            <person name="Oudot-Le Secq M.-P."/>
            <person name="Grimwood J."/>
            <person name="Shapiro H."/>
            <person name="Armbrust E.V."/>
            <person name="Bowler C."/>
            <person name="Green B.R."/>
        </authorList>
    </citation>
    <scope>NUCLEOTIDE SEQUENCE [LARGE SCALE GENOMIC DNA]</scope>
    <source>
        <strain>CCAP 1055/1</strain>
    </source>
</reference>
<evidence type="ECO:0000255" key="1">
    <source>
        <dbReference type="HAMAP-Rule" id="MF_01396"/>
    </source>
</evidence>
<name>ATPH_PHATC</name>
<gene>
    <name evidence="1" type="primary">atpH</name>
</gene>
<dbReference type="EMBL" id="EF067920">
    <property type="protein sequence ID" value="ABK20645.1"/>
    <property type="molecule type" value="Genomic_DNA"/>
</dbReference>
<dbReference type="RefSeq" id="YP_874422.1">
    <property type="nucleotide sequence ID" value="NC_008588.1"/>
</dbReference>
<dbReference type="SMR" id="A0T0E7"/>
<dbReference type="STRING" id="556484.A0T0E7"/>
<dbReference type="GeneID" id="4524627"/>
<dbReference type="InParanoid" id="A0T0E7"/>
<dbReference type="Proteomes" id="UP000000759">
    <property type="component" value="Chloroplast"/>
</dbReference>
<dbReference type="GO" id="GO:0009535">
    <property type="term" value="C:chloroplast thylakoid membrane"/>
    <property type="evidence" value="ECO:0007669"/>
    <property type="project" value="UniProtKB-SubCell"/>
</dbReference>
<dbReference type="GO" id="GO:0045259">
    <property type="term" value="C:proton-transporting ATP synthase complex"/>
    <property type="evidence" value="ECO:0007669"/>
    <property type="project" value="UniProtKB-KW"/>
</dbReference>
<dbReference type="GO" id="GO:0033177">
    <property type="term" value="C:proton-transporting two-sector ATPase complex, proton-transporting domain"/>
    <property type="evidence" value="ECO:0007669"/>
    <property type="project" value="InterPro"/>
</dbReference>
<dbReference type="GO" id="GO:0008289">
    <property type="term" value="F:lipid binding"/>
    <property type="evidence" value="ECO:0007669"/>
    <property type="project" value="UniProtKB-KW"/>
</dbReference>
<dbReference type="GO" id="GO:0046933">
    <property type="term" value="F:proton-transporting ATP synthase activity, rotational mechanism"/>
    <property type="evidence" value="ECO:0007669"/>
    <property type="project" value="UniProtKB-UniRule"/>
</dbReference>
<dbReference type="CDD" id="cd18183">
    <property type="entry name" value="ATP-synt_Fo_c_ATPH"/>
    <property type="match status" value="1"/>
</dbReference>
<dbReference type="FunFam" id="1.20.20.10:FF:000001">
    <property type="entry name" value="ATP synthase subunit c, chloroplastic"/>
    <property type="match status" value="1"/>
</dbReference>
<dbReference type="Gene3D" id="1.20.20.10">
    <property type="entry name" value="F1F0 ATP synthase subunit C"/>
    <property type="match status" value="1"/>
</dbReference>
<dbReference type="HAMAP" id="MF_01396">
    <property type="entry name" value="ATP_synth_c_bact"/>
    <property type="match status" value="1"/>
</dbReference>
<dbReference type="InterPro" id="IPR005953">
    <property type="entry name" value="ATP_synth_csu_bac/chlpt"/>
</dbReference>
<dbReference type="InterPro" id="IPR000454">
    <property type="entry name" value="ATP_synth_F0_csu"/>
</dbReference>
<dbReference type="InterPro" id="IPR020537">
    <property type="entry name" value="ATP_synth_F0_csu_DDCD_BS"/>
</dbReference>
<dbReference type="InterPro" id="IPR038662">
    <property type="entry name" value="ATP_synth_F0_csu_sf"/>
</dbReference>
<dbReference type="InterPro" id="IPR002379">
    <property type="entry name" value="ATPase_proteolipid_c-like_dom"/>
</dbReference>
<dbReference type="InterPro" id="IPR035921">
    <property type="entry name" value="F/V-ATP_Csub_sf"/>
</dbReference>
<dbReference type="NCBIfam" id="TIGR01260">
    <property type="entry name" value="ATP_synt_c"/>
    <property type="match status" value="1"/>
</dbReference>
<dbReference type="NCBIfam" id="NF005608">
    <property type="entry name" value="PRK07354.1"/>
    <property type="match status" value="1"/>
</dbReference>
<dbReference type="PANTHER" id="PTHR10031">
    <property type="entry name" value="ATP SYNTHASE LIPID-BINDING PROTEIN, MITOCHONDRIAL"/>
    <property type="match status" value="1"/>
</dbReference>
<dbReference type="PANTHER" id="PTHR10031:SF0">
    <property type="entry name" value="ATPASE PROTEIN 9"/>
    <property type="match status" value="1"/>
</dbReference>
<dbReference type="Pfam" id="PF00137">
    <property type="entry name" value="ATP-synt_C"/>
    <property type="match status" value="1"/>
</dbReference>
<dbReference type="PRINTS" id="PR00124">
    <property type="entry name" value="ATPASEC"/>
</dbReference>
<dbReference type="SUPFAM" id="SSF81333">
    <property type="entry name" value="F1F0 ATP synthase subunit C"/>
    <property type="match status" value="1"/>
</dbReference>
<dbReference type="PROSITE" id="PS00605">
    <property type="entry name" value="ATPASE_C"/>
    <property type="match status" value="1"/>
</dbReference>
<accession>A0T0E7</accession>
<feature type="chain" id="PRO_0000362977" description="ATP synthase subunit c, chloroplastic">
    <location>
        <begin position="1"/>
        <end position="82"/>
    </location>
</feature>
<feature type="transmembrane region" description="Helical" evidence="1">
    <location>
        <begin position="3"/>
        <end position="23"/>
    </location>
</feature>
<feature type="transmembrane region" description="Helical" evidence="1">
    <location>
        <begin position="57"/>
        <end position="77"/>
    </location>
</feature>
<feature type="site" description="Reversibly protonated during proton transport" evidence="1">
    <location>
        <position position="61"/>
    </location>
</feature>
<sequence>MDPIISAASVIGAGLSIGLAAIGPGIGQGTAAGQAVEGIARQPEAENKIRGVLLLSLAFMEALTIYGLVVALALLFANPFNT</sequence>
<organism>
    <name type="scientific">Phaeodactylum tricornutum (strain CCAP 1055/1)</name>
    <dbReference type="NCBI Taxonomy" id="556484"/>
    <lineage>
        <taxon>Eukaryota</taxon>
        <taxon>Sar</taxon>
        <taxon>Stramenopiles</taxon>
        <taxon>Ochrophyta</taxon>
        <taxon>Bacillariophyta</taxon>
        <taxon>Bacillariophyceae</taxon>
        <taxon>Bacillariophycidae</taxon>
        <taxon>Naviculales</taxon>
        <taxon>Phaeodactylaceae</taxon>
        <taxon>Phaeodactylum</taxon>
    </lineage>
</organism>
<geneLocation type="chloroplast"/>
<keyword id="KW-0066">ATP synthesis</keyword>
<keyword id="KW-0138">CF(0)</keyword>
<keyword id="KW-0150">Chloroplast</keyword>
<keyword id="KW-0375">Hydrogen ion transport</keyword>
<keyword id="KW-0406">Ion transport</keyword>
<keyword id="KW-0446">Lipid-binding</keyword>
<keyword id="KW-0472">Membrane</keyword>
<keyword id="KW-0934">Plastid</keyword>
<keyword id="KW-1185">Reference proteome</keyword>
<keyword id="KW-0793">Thylakoid</keyword>
<keyword id="KW-0812">Transmembrane</keyword>
<keyword id="KW-1133">Transmembrane helix</keyword>
<keyword id="KW-0813">Transport</keyword>